<feature type="chain" id="PRO_0000160752" description="NAD-dependent alcohol dehydrogenase">
    <location>
        <begin position="1"/>
        <end position="344"/>
    </location>
</feature>
<feature type="binding site" evidence="1">
    <location>
        <position position="38"/>
    </location>
    <ligand>
        <name>Zn(2+)</name>
        <dbReference type="ChEBI" id="CHEBI:29105"/>
        <label>1</label>
        <note>catalytic</note>
    </ligand>
</feature>
<feature type="binding site" evidence="1">
    <location>
        <position position="66"/>
    </location>
    <ligand>
        <name>Zn(2+)</name>
        <dbReference type="ChEBI" id="CHEBI:29105"/>
        <label>1</label>
        <note>catalytic</note>
    </ligand>
</feature>
<feature type="binding site" evidence="1">
    <location>
        <position position="96"/>
    </location>
    <ligand>
        <name>Zn(2+)</name>
        <dbReference type="ChEBI" id="CHEBI:29105"/>
        <label>2</label>
    </ligand>
</feature>
<feature type="binding site" evidence="1">
    <location>
        <position position="99"/>
    </location>
    <ligand>
        <name>Zn(2+)</name>
        <dbReference type="ChEBI" id="CHEBI:29105"/>
        <label>2</label>
    </ligand>
</feature>
<feature type="binding site" evidence="1">
    <location>
        <position position="102"/>
    </location>
    <ligand>
        <name>Zn(2+)</name>
        <dbReference type="ChEBI" id="CHEBI:29105"/>
        <label>2</label>
    </ligand>
</feature>
<feature type="binding site" evidence="1">
    <location>
        <position position="110"/>
    </location>
    <ligand>
        <name>Zn(2+)</name>
        <dbReference type="ChEBI" id="CHEBI:29105"/>
        <label>2</label>
    </ligand>
</feature>
<feature type="binding site" evidence="1">
    <location>
        <position position="152"/>
    </location>
    <ligand>
        <name>Zn(2+)</name>
        <dbReference type="ChEBI" id="CHEBI:29105"/>
        <label>1</label>
        <note>catalytic</note>
    </ligand>
</feature>
<sequence length="344" mass="37086">MKAMLLHKFGEPLRLEDMDVPKVGVGQVLVKVDYAGVCHTDLSVRSGAIFNRISSSKPTLPLVIGHEIAGEVVELGGNVEGFKKSDKVLIDPWIGDGSCHYCKIGEDQYCDNPKWLGINVNGGYGEYVLVPDYRYMFKLRNLSTSTASPLACSGVTAYRALRLANLDPSKSVMIIGAGGGLGSIAVQIAKAIHGSFIIGVDVSEEGLKLATNLGADYVTSKVDEEEVRKITTGRGVDAIIDFVGSEFTTSNYYTLLAKLGRYVKVGTYGGGLPHDAGLRLHSMGWQFIGTLTGNRKDFLEVLELAENGKIKPMITKVLSLEEANDALDNLEKGKVSGRQVLKVT</sequence>
<proteinExistence type="inferred from homology"/>
<accession>Q4J781</accession>
<keyword id="KW-0479">Metal-binding</keyword>
<keyword id="KW-0520">NAD</keyword>
<keyword id="KW-0560">Oxidoreductase</keyword>
<keyword id="KW-1185">Reference proteome</keyword>
<keyword id="KW-0862">Zinc</keyword>
<gene>
    <name type="primary">adh</name>
    <name type="ordered locus">Saci_2057</name>
</gene>
<organism>
    <name type="scientific">Sulfolobus acidocaldarius (strain ATCC 33909 / DSM 639 / JCM 8929 / NBRC 15157 / NCIMB 11770)</name>
    <dbReference type="NCBI Taxonomy" id="330779"/>
    <lineage>
        <taxon>Archaea</taxon>
        <taxon>Thermoproteota</taxon>
        <taxon>Thermoprotei</taxon>
        <taxon>Sulfolobales</taxon>
        <taxon>Sulfolobaceae</taxon>
        <taxon>Sulfolobus</taxon>
    </lineage>
</organism>
<reference key="1">
    <citation type="journal article" date="2005" name="J. Bacteriol.">
        <title>The genome of Sulfolobus acidocaldarius, a model organism of the Crenarchaeota.</title>
        <authorList>
            <person name="Chen L."/>
            <person name="Bruegger K."/>
            <person name="Skovgaard M."/>
            <person name="Redder P."/>
            <person name="She Q."/>
            <person name="Torarinsson E."/>
            <person name="Greve B."/>
            <person name="Awayez M."/>
            <person name="Zibat A."/>
            <person name="Klenk H.-P."/>
            <person name="Garrett R.A."/>
        </authorList>
    </citation>
    <scope>NUCLEOTIDE SEQUENCE [LARGE SCALE GENOMIC DNA]</scope>
    <source>
        <strain>ATCC 33909 / DSM 639 / JCM 8929 / NBRC 15157 / NCIMB 11770</strain>
    </source>
</reference>
<dbReference type="EC" id="1.1.1.1"/>
<dbReference type="EMBL" id="CP000077">
    <property type="protein sequence ID" value="AAY81351.1"/>
    <property type="molecule type" value="Genomic_DNA"/>
</dbReference>
<dbReference type="RefSeq" id="WP_011278853.1">
    <property type="nucleotide sequence ID" value="NC_007181.1"/>
</dbReference>
<dbReference type="SMR" id="Q4J781"/>
<dbReference type="STRING" id="330779.Saci_2057"/>
<dbReference type="GeneID" id="14552572"/>
<dbReference type="KEGG" id="sai:Saci_2057"/>
<dbReference type="PATRIC" id="fig|330779.12.peg.2056"/>
<dbReference type="eggNOG" id="arCOG01455">
    <property type="taxonomic scope" value="Archaea"/>
</dbReference>
<dbReference type="HOGENOM" id="CLU_026673_11_2_2"/>
<dbReference type="Proteomes" id="UP000001018">
    <property type="component" value="Chromosome"/>
</dbReference>
<dbReference type="GO" id="GO:0004022">
    <property type="term" value="F:alcohol dehydrogenase (NAD+) activity"/>
    <property type="evidence" value="ECO:0007669"/>
    <property type="project" value="UniProtKB-EC"/>
</dbReference>
<dbReference type="GO" id="GO:0008270">
    <property type="term" value="F:zinc ion binding"/>
    <property type="evidence" value="ECO:0007669"/>
    <property type="project" value="InterPro"/>
</dbReference>
<dbReference type="CDD" id="cd05284">
    <property type="entry name" value="arabinose_DH_like"/>
    <property type="match status" value="1"/>
</dbReference>
<dbReference type="Gene3D" id="3.90.180.10">
    <property type="entry name" value="Medium-chain alcohol dehydrogenases, catalytic domain"/>
    <property type="match status" value="1"/>
</dbReference>
<dbReference type="Gene3D" id="3.40.50.720">
    <property type="entry name" value="NAD(P)-binding Rossmann-like Domain"/>
    <property type="match status" value="1"/>
</dbReference>
<dbReference type="InterPro" id="IPR013149">
    <property type="entry name" value="ADH-like_C"/>
</dbReference>
<dbReference type="InterPro" id="IPR013154">
    <property type="entry name" value="ADH-like_N"/>
</dbReference>
<dbReference type="InterPro" id="IPR002328">
    <property type="entry name" value="ADH_Zn_CS"/>
</dbReference>
<dbReference type="InterPro" id="IPR011032">
    <property type="entry name" value="GroES-like_sf"/>
</dbReference>
<dbReference type="InterPro" id="IPR036291">
    <property type="entry name" value="NAD(P)-bd_dom_sf"/>
</dbReference>
<dbReference type="InterPro" id="IPR020843">
    <property type="entry name" value="PKS_ER"/>
</dbReference>
<dbReference type="PANTHER" id="PTHR42940">
    <property type="entry name" value="ALCOHOL DEHYDROGENASE 1-RELATED"/>
    <property type="match status" value="1"/>
</dbReference>
<dbReference type="PANTHER" id="PTHR42940:SF8">
    <property type="entry name" value="VACUOLAR PROTEIN SORTING-ASSOCIATED PROTEIN 11"/>
    <property type="match status" value="1"/>
</dbReference>
<dbReference type="Pfam" id="PF08240">
    <property type="entry name" value="ADH_N"/>
    <property type="match status" value="1"/>
</dbReference>
<dbReference type="Pfam" id="PF00107">
    <property type="entry name" value="ADH_zinc_N"/>
    <property type="match status" value="1"/>
</dbReference>
<dbReference type="SMART" id="SM00829">
    <property type="entry name" value="PKS_ER"/>
    <property type="match status" value="1"/>
</dbReference>
<dbReference type="SUPFAM" id="SSF50129">
    <property type="entry name" value="GroES-like"/>
    <property type="match status" value="1"/>
</dbReference>
<dbReference type="SUPFAM" id="SSF51735">
    <property type="entry name" value="NAD(P)-binding Rossmann-fold domains"/>
    <property type="match status" value="1"/>
</dbReference>
<dbReference type="PROSITE" id="PS00059">
    <property type="entry name" value="ADH_ZINC"/>
    <property type="match status" value="1"/>
</dbReference>
<name>ADH_SULAC</name>
<evidence type="ECO:0000250" key="1"/>
<evidence type="ECO:0000305" key="2"/>
<comment type="catalytic activity">
    <reaction>
        <text>a primary alcohol + NAD(+) = an aldehyde + NADH + H(+)</text>
        <dbReference type="Rhea" id="RHEA:10736"/>
        <dbReference type="ChEBI" id="CHEBI:15378"/>
        <dbReference type="ChEBI" id="CHEBI:15734"/>
        <dbReference type="ChEBI" id="CHEBI:17478"/>
        <dbReference type="ChEBI" id="CHEBI:57540"/>
        <dbReference type="ChEBI" id="CHEBI:57945"/>
        <dbReference type="EC" id="1.1.1.1"/>
    </reaction>
</comment>
<comment type="catalytic activity">
    <reaction>
        <text>a secondary alcohol + NAD(+) = a ketone + NADH + H(+)</text>
        <dbReference type="Rhea" id="RHEA:10740"/>
        <dbReference type="ChEBI" id="CHEBI:15378"/>
        <dbReference type="ChEBI" id="CHEBI:17087"/>
        <dbReference type="ChEBI" id="CHEBI:35681"/>
        <dbReference type="ChEBI" id="CHEBI:57540"/>
        <dbReference type="ChEBI" id="CHEBI:57945"/>
        <dbReference type="EC" id="1.1.1.1"/>
    </reaction>
</comment>
<comment type="cofactor">
    <cofactor evidence="1">
        <name>Zn(2+)</name>
        <dbReference type="ChEBI" id="CHEBI:29105"/>
    </cofactor>
    <text evidence="1">Binds 2 Zn(2+) ions per subunit.</text>
</comment>
<comment type="subunit">
    <text evidence="1">Homodimer and homotetramer.</text>
</comment>
<comment type="similarity">
    <text evidence="2">Belongs to the zinc-containing alcohol dehydrogenase family.</text>
</comment>
<protein>
    <recommendedName>
        <fullName>NAD-dependent alcohol dehydrogenase</fullName>
        <ecNumber>1.1.1.1</ecNumber>
    </recommendedName>
</protein>